<sequence>MDQLEMKKMAAQAALQFVQPDSIVGVGSGSTVNCFIEALGAMRDQIKGAVAASKASEELLRKQGIEVFSANDVSSLDIYVDGADEINPQKMMIKGGGAALTREKIVASLTKNFICIVDSSKQVDVLGSTFPLPVEVIPMARSQVARKLVALGGSPEWRQGVVTDNGNVILDVHNFPIMNPPEMEKELNNVAGVVTNGIFALNAANTVIVGTPEGAKIIK</sequence>
<organism>
    <name type="scientific">Actinobacillus succinogenes (strain ATCC 55618 / DSM 22257 / CCUG 43843 / 130Z)</name>
    <dbReference type="NCBI Taxonomy" id="339671"/>
    <lineage>
        <taxon>Bacteria</taxon>
        <taxon>Pseudomonadati</taxon>
        <taxon>Pseudomonadota</taxon>
        <taxon>Gammaproteobacteria</taxon>
        <taxon>Pasteurellales</taxon>
        <taxon>Pasteurellaceae</taxon>
        <taxon>Actinobacillus</taxon>
    </lineage>
</organism>
<proteinExistence type="inferred from homology"/>
<dbReference type="EC" id="5.3.1.6" evidence="1"/>
<dbReference type="EMBL" id="CP000746">
    <property type="protein sequence ID" value="ABR75221.1"/>
    <property type="molecule type" value="Genomic_DNA"/>
</dbReference>
<dbReference type="RefSeq" id="WP_012073598.1">
    <property type="nucleotide sequence ID" value="NC_009655.1"/>
</dbReference>
<dbReference type="SMR" id="A6VQH4"/>
<dbReference type="STRING" id="339671.Asuc_1870"/>
<dbReference type="KEGG" id="asu:Asuc_1870"/>
<dbReference type="eggNOG" id="COG0120">
    <property type="taxonomic scope" value="Bacteria"/>
</dbReference>
<dbReference type="HOGENOM" id="CLU_056590_1_1_6"/>
<dbReference type="OrthoDB" id="5870696at2"/>
<dbReference type="UniPathway" id="UPA00115">
    <property type="reaction ID" value="UER00412"/>
</dbReference>
<dbReference type="Proteomes" id="UP000001114">
    <property type="component" value="Chromosome"/>
</dbReference>
<dbReference type="GO" id="GO:0005829">
    <property type="term" value="C:cytosol"/>
    <property type="evidence" value="ECO:0007669"/>
    <property type="project" value="TreeGrafter"/>
</dbReference>
<dbReference type="GO" id="GO:0004751">
    <property type="term" value="F:ribose-5-phosphate isomerase activity"/>
    <property type="evidence" value="ECO:0007669"/>
    <property type="project" value="UniProtKB-UniRule"/>
</dbReference>
<dbReference type="GO" id="GO:0006014">
    <property type="term" value="P:D-ribose metabolic process"/>
    <property type="evidence" value="ECO:0007669"/>
    <property type="project" value="TreeGrafter"/>
</dbReference>
<dbReference type="GO" id="GO:0009052">
    <property type="term" value="P:pentose-phosphate shunt, non-oxidative branch"/>
    <property type="evidence" value="ECO:0007669"/>
    <property type="project" value="UniProtKB-UniRule"/>
</dbReference>
<dbReference type="CDD" id="cd01398">
    <property type="entry name" value="RPI_A"/>
    <property type="match status" value="1"/>
</dbReference>
<dbReference type="FunFam" id="3.30.70.260:FF:000004">
    <property type="entry name" value="Ribose-5-phosphate isomerase A"/>
    <property type="match status" value="1"/>
</dbReference>
<dbReference type="FunFam" id="3.40.50.1360:FF:000001">
    <property type="entry name" value="Ribose-5-phosphate isomerase A"/>
    <property type="match status" value="1"/>
</dbReference>
<dbReference type="Gene3D" id="3.30.70.260">
    <property type="match status" value="1"/>
</dbReference>
<dbReference type="Gene3D" id="3.40.50.1360">
    <property type="match status" value="1"/>
</dbReference>
<dbReference type="HAMAP" id="MF_00170">
    <property type="entry name" value="Rib_5P_isom_A"/>
    <property type="match status" value="1"/>
</dbReference>
<dbReference type="InterPro" id="IPR037171">
    <property type="entry name" value="NagB/RpiA_transferase-like"/>
</dbReference>
<dbReference type="InterPro" id="IPR020672">
    <property type="entry name" value="Ribose5P_isomerase_typA_subgr"/>
</dbReference>
<dbReference type="InterPro" id="IPR004788">
    <property type="entry name" value="Ribose5P_isomerase_type_A"/>
</dbReference>
<dbReference type="NCBIfam" id="NF001924">
    <property type="entry name" value="PRK00702.1"/>
    <property type="match status" value="1"/>
</dbReference>
<dbReference type="NCBIfam" id="TIGR00021">
    <property type="entry name" value="rpiA"/>
    <property type="match status" value="1"/>
</dbReference>
<dbReference type="PANTHER" id="PTHR11934">
    <property type="entry name" value="RIBOSE-5-PHOSPHATE ISOMERASE"/>
    <property type="match status" value="1"/>
</dbReference>
<dbReference type="PANTHER" id="PTHR11934:SF0">
    <property type="entry name" value="RIBOSE-5-PHOSPHATE ISOMERASE"/>
    <property type="match status" value="1"/>
</dbReference>
<dbReference type="Pfam" id="PF06026">
    <property type="entry name" value="Rib_5-P_isom_A"/>
    <property type="match status" value="1"/>
</dbReference>
<dbReference type="SUPFAM" id="SSF75445">
    <property type="entry name" value="D-ribose-5-phosphate isomerase (RpiA), lid domain"/>
    <property type="match status" value="1"/>
</dbReference>
<dbReference type="SUPFAM" id="SSF100950">
    <property type="entry name" value="NagB/RpiA/CoA transferase-like"/>
    <property type="match status" value="1"/>
</dbReference>
<gene>
    <name evidence="1" type="primary">rpiA</name>
    <name type="ordered locus">Asuc_1870</name>
</gene>
<feature type="chain" id="PRO_1000071585" description="Ribose-5-phosphate isomerase A">
    <location>
        <begin position="1"/>
        <end position="219"/>
    </location>
</feature>
<feature type="active site" description="Proton acceptor" evidence="1">
    <location>
        <position position="103"/>
    </location>
</feature>
<feature type="binding site" evidence="1">
    <location>
        <begin position="28"/>
        <end position="31"/>
    </location>
    <ligand>
        <name>substrate</name>
    </ligand>
</feature>
<feature type="binding site" evidence="1">
    <location>
        <begin position="81"/>
        <end position="84"/>
    </location>
    <ligand>
        <name>substrate</name>
    </ligand>
</feature>
<feature type="binding site" evidence="1">
    <location>
        <begin position="94"/>
        <end position="97"/>
    </location>
    <ligand>
        <name>substrate</name>
    </ligand>
</feature>
<feature type="binding site" evidence="1">
    <location>
        <position position="121"/>
    </location>
    <ligand>
        <name>substrate</name>
    </ligand>
</feature>
<evidence type="ECO:0000255" key="1">
    <source>
        <dbReference type="HAMAP-Rule" id="MF_00170"/>
    </source>
</evidence>
<accession>A6VQH4</accession>
<keyword id="KW-0413">Isomerase</keyword>
<keyword id="KW-1185">Reference proteome</keyword>
<reference key="1">
    <citation type="journal article" date="2010" name="BMC Genomics">
        <title>A genomic perspective on the potential of Actinobacillus succinogenes for industrial succinate production.</title>
        <authorList>
            <person name="McKinlay J.B."/>
            <person name="Laivenieks M."/>
            <person name="Schindler B.D."/>
            <person name="McKinlay A.A."/>
            <person name="Siddaramappa S."/>
            <person name="Challacombe J.F."/>
            <person name="Lowry S.R."/>
            <person name="Clum A."/>
            <person name="Lapidus A.L."/>
            <person name="Burkhart K.B."/>
            <person name="Harkins V."/>
            <person name="Vieille C."/>
        </authorList>
    </citation>
    <scope>NUCLEOTIDE SEQUENCE [LARGE SCALE GENOMIC DNA]</scope>
    <source>
        <strain>ATCC 55618 / DSM 22257 / CCUG 43843 / 130Z</strain>
    </source>
</reference>
<comment type="function">
    <text evidence="1">Catalyzes the reversible conversion of ribose-5-phosphate to ribulose 5-phosphate.</text>
</comment>
<comment type="catalytic activity">
    <reaction evidence="1">
        <text>aldehydo-D-ribose 5-phosphate = D-ribulose 5-phosphate</text>
        <dbReference type="Rhea" id="RHEA:14657"/>
        <dbReference type="ChEBI" id="CHEBI:58121"/>
        <dbReference type="ChEBI" id="CHEBI:58273"/>
        <dbReference type="EC" id="5.3.1.6"/>
    </reaction>
</comment>
<comment type="pathway">
    <text evidence="1">Carbohydrate degradation; pentose phosphate pathway; D-ribose 5-phosphate from D-ribulose 5-phosphate (non-oxidative stage): step 1/1.</text>
</comment>
<comment type="subunit">
    <text evidence="1">Homodimer.</text>
</comment>
<comment type="similarity">
    <text evidence="1">Belongs to the ribose 5-phosphate isomerase family.</text>
</comment>
<name>RPIA_ACTSZ</name>
<protein>
    <recommendedName>
        <fullName evidence="1">Ribose-5-phosphate isomerase A</fullName>
        <ecNumber evidence="1">5.3.1.6</ecNumber>
    </recommendedName>
    <alternativeName>
        <fullName evidence="1">Phosphoriboisomerase A</fullName>
        <shortName evidence="1">PRI</shortName>
    </alternativeName>
</protein>